<comment type="function">
    <text evidence="1">Binds to DNA and alters its conformation. May be involved in regulation of gene expression, nucleoid organization and DNA protection.</text>
</comment>
<comment type="subunit">
    <text evidence="1">Homodimer.</text>
</comment>
<comment type="subcellular location">
    <subcellularLocation>
        <location evidence="1">Cytoplasm</location>
        <location evidence="1">Nucleoid</location>
    </subcellularLocation>
</comment>
<comment type="similarity">
    <text evidence="1">Belongs to the YbaB/EbfC family.</text>
</comment>
<evidence type="ECO:0000255" key="1">
    <source>
        <dbReference type="HAMAP-Rule" id="MF_00274"/>
    </source>
</evidence>
<evidence type="ECO:0000256" key="2">
    <source>
        <dbReference type="SAM" id="MobiDB-lite"/>
    </source>
</evidence>
<feature type="chain" id="PRO_1000114592" description="Nucleoid-associated protein Bmul_1447/BMULJ_01796">
    <location>
        <begin position="1"/>
        <end position="108"/>
    </location>
</feature>
<feature type="region of interest" description="Disordered" evidence="2">
    <location>
        <begin position="84"/>
        <end position="108"/>
    </location>
</feature>
<feature type="compositionally biased region" description="Polar residues" evidence="2">
    <location>
        <begin position="85"/>
        <end position="95"/>
    </location>
</feature>
<feature type="compositionally biased region" description="Pro residues" evidence="2">
    <location>
        <begin position="99"/>
        <end position="108"/>
    </location>
</feature>
<proteinExistence type="inferred from homology"/>
<keyword id="KW-0963">Cytoplasm</keyword>
<keyword id="KW-0238">DNA-binding</keyword>
<keyword id="KW-1185">Reference proteome</keyword>
<protein>
    <recommendedName>
        <fullName evidence="1">Nucleoid-associated protein Bmul_1447/BMULJ_01796</fullName>
    </recommendedName>
</protein>
<gene>
    <name type="ordered locus">Bmul_1447</name>
    <name type="ordered locus">BMULJ_01796</name>
</gene>
<sequence>MLKGNLAGLMKQAQQMQENMRKMQEQLAQIEVEGQSGAGLVKVTMTCRNEVRRVSIDPSLLADDKDMLEDLVAAAFNDAVRKAEATSQEKMSGMTSGLPLPPGFKLPF</sequence>
<name>Y1796_BURM1</name>
<dbReference type="EMBL" id="CP000868">
    <property type="protein sequence ID" value="ABX15135.1"/>
    <property type="molecule type" value="Genomic_DNA"/>
</dbReference>
<dbReference type="EMBL" id="AP009385">
    <property type="protein sequence ID" value="BAG43716.1"/>
    <property type="molecule type" value="Genomic_DNA"/>
</dbReference>
<dbReference type="RefSeq" id="WP_012213247.1">
    <property type="nucleotide sequence ID" value="NC_010084.1"/>
</dbReference>
<dbReference type="SMR" id="A9AGY0"/>
<dbReference type="STRING" id="395019.BMULJ_01796"/>
<dbReference type="KEGG" id="bmj:BMULJ_01796"/>
<dbReference type="KEGG" id="bmu:Bmul_1447"/>
<dbReference type="eggNOG" id="COG0718">
    <property type="taxonomic scope" value="Bacteria"/>
</dbReference>
<dbReference type="HOGENOM" id="CLU_140930_0_0_4"/>
<dbReference type="Proteomes" id="UP000008815">
    <property type="component" value="Chromosome 1"/>
</dbReference>
<dbReference type="GO" id="GO:0043590">
    <property type="term" value="C:bacterial nucleoid"/>
    <property type="evidence" value="ECO:0007669"/>
    <property type="project" value="UniProtKB-UniRule"/>
</dbReference>
<dbReference type="GO" id="GO:0005829">
    <property type="term" value="C:cytosol"/>
    <property type="evidence" value="ECO:0007669"/>
    <property type="project" value="TreeGrafter"/>
</dbReference>
<dbReference type="GO" id="GO:0003677">
    <property type="term" value="F:DNA binding"/>
    <property type="evidence" value="ECO:0007669"/>
    <property type="project" value="UniProtKB-UniRule"/>
</dbReference>
<dbReference type="FunFam" id="3.30.1310.10:FF:000001">
    <property type="entry name" value="Nucleoid-associated protein YbaB"/>
    <property type="match status" value="1"/>
</dbReference>
<dbReference type="Gene3D" id="3.30.1310.10">
    <property type="entry name" value="Nucleoid-associated protein YbaB-like domain"/>
    <property type="match status" value="1"/>
</dbReference>
<dbReference type="HAMAP" id="MF_00274">
    <property type="entry name" value="DNA_YbaB_EbfC"/>
    <property type="match status" value="1"/>
</dbReference>
<dbReference type="InterPro" id="IPR036894">
    <property type="entry name" value="YbaB-like_sf"/>
</dbReference>
<dbReference type="InterPro" id="IPR004401">
    <property type="entry name" value="YbaB/EbfC"/>
</dbReference>
<dbReference type="NCBIfam" id="TIGR00103">
    <property type="entry name" value="DNA_YbaB_EbfC"/>
    <property type="match status" value="1"/>
</dbReference>
<dbReference type="PANTHER" id="PTHR33449">
    <property type="entry name" value="NUCLEOID-ASSOCIATED PROTEIN YBAB"/>
    <property type="match status" value="1"/>
</dbReference>
<dbReference type="PANTHER" id="PTHR33449:SF1">
    <property type="entry name" value="NUCLEOID-ASSOCIATED PROTEIN YBAB"/>
    <property type="match status" value="1"/>
</dbReference>
<dbReference type="Pfam" id="PF02575">
    <property type="entry name" value="YbaB_DNA_bd"/>
    <property type="match status" value="1"/>
</dbReference>
<dbReference type="PIRSF" id="PIRSF004555">
    <property type="entry name" value="UCP004555"/>
    <property type="match status" value="1"/>
</dbReference>
<dbReference type="SUPFAM" id="SSF82607">
    <property type="entry name" value="YbaB-like"/>
    <property type="match status" value="1"/>
</dbReference>
<organism>
    <name type="scientific">Burkholderia multivorans (strain ATCC 17616 / 249)</name>
    <dbReference type="NCBI Taxonomy" id="395019"/>
    <lineage>
        <taxon>Bacteria</taxon>
        <taxon>Pseudomonadati</taxon>
        <taxon>Pseudomonadota</taxon>
        <taxon>Betaproteobacteria</taxon>
        <taxon>Burkholderiales</taxon>
        <taxon>Burkholderiaceae</taxon>
        <taxon>Burkholderia</taxon>
        <taxon>Burkholderia cepacia complex</taxon>
    </lineage>
</organism>
<reference key="1">
    <citation type="submission" date="2007-10" db="EMBL/GenBank/DDBJ databases">
        <title>Complete sequence of chromosome 1 of Burkholderia multivorans ATCC 17616.</title>
        <authorList>
            <person name="Copeland A."/>
            <person name="Lucas S."/>
            <person name="Lapidus A."/>
            <person name="Barry K."/>
            <person name="Glavina del Rio T."/>
            <person name="Dalin E."/>
            <person name="Tice H."/>
            <person name="Pitluck S."/>
            <person name="Chain P."/>
            <person name="Malfatti S."/>
            <person name="Shin M."/>
            <person name="Vergez L."/>
            <person name="Schmutz J."/>
            <person name="Larimer F."/>
            <person name="Land M."/>
            <person name="Hauser L."/>
            <person name="Kyrpides N."/>
            <person name="Kim E."/>
            <person name="Tiedje J."/>
            <person name="Richardson P."/>
        </authorList>
    </citation>
    <scope>NUCLEOTIDE SEQUENCE [LARGE SCALE GENOMIC DNA]</scope>
    <source>
        <strain>ATCC 17616 / 249</strain>
    </source>
</reference>
<reference key="2">
    <citation type="submission" date="2007-04" db="EMBL/GenBank/DDBJ databases">
        <title>Complete genome sequence of Burkholderia multivorans ATCC 17616.</title>
        <authorList>
            <person name="Ohtsubo Y."/>
            <person name="Yamashita A."/>
            <person name="Kurokawa K."/>
            <person name="Takami H."/>
            <person name="Yuhara S."/>
            <person name="Nishiyama E."/>
            <person name="Endo R."/>
            <person name="Miyazaki R."/>
            <person name="Ono A."/>
            <person name="Yano K."/>
            <person name="Ito M."/>
            <person name="Sota M."/>
            <person name="Yuji N."/>
            <person name="Hattori M."/>
            <person name="Tsuda M."/>
        </authorList>
    </citation>
    <scope>NUCLEOTIDE SEQUENCE [LARGE SCALE GENOMIC DNA]</scope>
    <source>
        <strain>ATCC 17616 / 249</strain>
    </source>
</reference>
<accession>A9AGY0</accession>